<reference key="1">
    <citation type="submission" date="2001-10" db="EMBL/GenBank/DDBJ databases">
        <title>Cucumber homolog of Lotus japonicus rbl14 protein.</title>
        <authorList>
            <person name="Bai S."/>
            <person name="Liang Y."/>
            <person name="Wang D."/>
            <person name="Lu X."/>
            <person name="Xu Z."/>
            <person name="Bai S."/>
        </authorList>
    </citation>
    <scope>NUCLEOTIDE SEQUENCE [MRNA]</scope>
</reference>
<reference key="2">
    <citation type="journal article" date="2006" name="Plant Cell Rep.">
        <title>Complete sequence and organization of the cucumber (Cucumis sativus L. cv. Baekmibaekdadagi) chloroplast genome.</title>
        <authorList>
            <person name="Kim J.-S."/>
            <person name="Jung J.D."/>
            <person name="Lee J.-A."/>
            <person name="Park H.-W."/>
            <person name="Oh K.-H."/>
            <person name="Jeong W.J."/>
            <person name="Choi D.-W."/>
            <person name="Liu J.R."/>
            <person name="Cho K.Y."/>
        </authorList>
    </citation>
    <scope>NUCLEOTIDE SEQUENCE [LARGE SCALE GENOMIC DNA]</scope>
    <source>
        <strain>cv. Baekmibaekdadagi</strain>
    </source>
</reference>
<reference key="3">
    <citation type="journal article" date="2007" name="Cell. Mol. Biol. Lett.">
        <title>The complete structure of the cucumber (Cucumis sativus L.) chloroplast genome: its composition and comparative analysis.</title>
        <authorList>
            <person name="Plader W.W."/>
            <person name="Yukawa Y."/>
            <person name="Sugiura M."/>
            <person name="Malepszy S."/>
        </authorList>
    </citation>
    <scope>NUCLEOTIDE SEQUENCE [LARGE SCALE GENOMIC DNA]</scope>
    <source>
        <strain>cv. Borszczagowski</strain>
    </source>
</reference>
<reference key="4">
    <citation type="journal article" date="2007" name="Genome">
        <title>Sequencing cucumber (Cucumis sativus L.) chloroplast genomes identifies differences between chilling-tolerant and -susceptible cucumber lines.</title>
        <authorList>
            <person name="Chung S.-M."/>
            <person name="Gordon V.S."/>
            <person name="Staub J.E."/>
        </authorList>
    </citation>
    <scope>NUCLEOTIDE SEQUENCE [LARGE SCALE GENOMIC DNA]</scope>
    <source>
        <strain>cv. Chipper</strain>
        <strain>cv. Gy14</strain>
    </source>
</reference>
<organism>
    <name type="scientific">Cucumis sativus</name>
    <name type="common">Cucumber</name>
    <dbReference type="NCBI Taxonomy" id="3659"/>
    <lineage>
        <taxon>Eukaryota</taxon>
        <taxon>Viridiplantae</taxon>
        <taxon>Streptophyta</taxon>
        <taxon>Embryophyta</taxon>
        <taxon>Tracheophyta</taxon>
        <taxon>Spermatophyta</taxon>
        <taxon>Magnoliopsida</taxon>
        <taxon>eudicotyledons</taxon>
        <taxon>Gunneridae</taxon>
        <taxon>Pentapetalae</taxon>
        <taxon>rosids</taxon>
        <taxon>fabids</taxon>
        <taxon>Cucurbitales</taxon>
        <taxon>Cucurbitaceae</taxon>
        <taxon>Benincaseae</taxon>
        <taxon>Cucumis</taxon>
    </lineage>
</organism>
<protein>
    <recommendedName>
        <fullName evidence="1">Large ribosomal subunit protein uL14c</fullName>
    </recommendedName>
    <alternativeName>
        <fullName evidence="2">50S ribosomal protein L14, chloroplastic</fullName>
    </alternativeName>
</protein>
<comment type="function">
    <text evidence="1">Binds to 23S rRNA.</text>
</comment>
<comment type="subunit">
    <text evidence="1">Part of the 50S ribosomal subunit.</text>
</comment>
<comment type="subcellular location">
    <subcellularLocation>
        <location>Plastid</location>
        <location>Chloroplast</location>
    </subcellularLocation>
</comment>
<comment type="similarity">
    <text evidence="1">Belongs to the universal ribosomal protein uL14 family.</text>
</comment>
<name>RK14_CUCSA</name>
<accession>Q8WKP4</accession>
<accession>A5J1X1</accession>
<keyword id="KW-0150">Chloroplast</keyword>
<keyword id="KW-0934">Plastid</keyword>
<keyword id="KW-0687">Ribonucleoprotein</keyword>
<keyword id="KW-0689">Ribosomal protein</keyword>
<keyword id="KW-0694">RNA-binding</keyword>
<keyword id="KW-0699">rRNA-binding</keyword>
<dbReference type="EMBL" id="AF441853">
    <property type="protein sequence ID" value="AAL35833.1"/>
    <property type="molecule type" value="mRNA"/>
</dbReference>
<dbReference type="EMBL" id="DQ119058">
    <property type="protein sequence ID" value="AAZ94686.1"/>
    <property type="molecule type" value="Genomic_DNA"/>
</dbReference>
<dbReference type="EMBL" id="AJ970307">
    <property type="protein sequence ID" value="CAJ00795.1"/>
    <property type="molecule type" value="Genomic_DNA"/>
</dbReference>
<dbReference type="EMBL" id="DQ865975">
    <property type="protein sequence ID" value="ABI97453.1"/>
    <property type="molecule type" value="Genomic_DNA"/>
</dbReference>
<dbReference type="EMBL" id="DQ865976">
    <property type="protein sequence ID" value="ABI98782.1"/>
    <property type="molecule type" value="Genomic_DNA"/>
</dbReference>
<dbReference type="RefSeq" id="YP_247636.1">
    <property type="nucleotide sequence ID" value="NC_007144.1"/>
</dbReference>
<dbReference type="SMR" id="Q8WKP4"/>
<dbReference type="GeneID" id="3429290"/>
<dbReference type="KEGG" id="csv:3429290"/>
<dbReference type="eggNOG" id="KOG0901">
    <property type="taxonomic scope" value="Eukaryota"/>
</dbReference>
<dbReference type="OrthoDB" id="1850746at2759"/>
<dbReference type="GO" id="GO:0009507">
    <property type="term" value="C:chloroplast"/>
    <property type="evidence" value="ECO:0007669"/>
    <property type="project" value="UniProtKB-SubCell"/>
</dbReference>
<dbReference type="GO" id="GO:0015934">
    <property type="term" value="C:large ribosomal subunit"/>
    <property type="evidence" value="ECO:0007669"/>
    <property type="project" value="InterPro"/>
</dbReference>
<dbReference type="GO" id="GO:0019843">
    <property type="term" value="F:rRNA binding"/>
    <property type="evidence" value="ECO:0007669"/>
    <property type="project" value="UniProtKB-UniRule"/>
</dbReference>
<dbReference type="GO" id="GO:0003735">
    <property type="term" value="F:structural constituent of ribosome"/>
    <property type="evidence" value="ECO:0007669"/>
    <property type="project" value="InterPro"/>
</dbReference>
<dbReference type="GO" id="GO:0006412">
    <property type="term" value="P:translation"/>
    <property type="evidence" value="ECO:0007669"/>
    <property type="project" value="UniProtKB-UniRule"/>
</dbReference>
<dbReference type="CDD" id="cd00337">
    <property type="entry name" value="Ribosomal_uL14"/>
    <property type="match status" value="1"/>
</dbReference>
<dbReference type="FunFam" id="2.40.150.20:FF:000002">
    <property type="entry name" value="50S ribosomal protein L14, chloroplastic"/>
    <property type="match status" value="1"/>
</dbReference>
<dbReference type="Gene3D" id="2.40.150.20">
    <property type="entry name" value="Ribosomal protein L14"/>
    <property type="match status" value="1"/>
</dbReference>
<dbReference type="HAMAP" id="MF_01367">
    <property type="entry name" value="Ribosomal_uL14"/>
    <property type="match status" value="1"/>
</dbReference>
<dbReference type="InterPro" id="IPR000218">
    <property type="entry name" value="Ribosomal_uL14"/>
</dbReference>
<dbReference type="InterPro" id="IPR005745">
    <property type="entry name" value="Ribosomal_uL14_bac-type"/>
</dbReference>
<dbReference type="InterPro" id="IPR019972">
    <property type="entry name" value="Ribosomal_uL14_CS"/>
</dbReference>
<dbReference type="InterPro" id="IPR036853">
    <property type="entry name" value="Ribosomal_uL14_sf"/>
</dbReference>
<dbReference type="NCBIfam" id="TIGR01067">
    <property type="entry name" value="rplN_bact"/>
    <property type="match status" value="1"/>
</dbReference>
<dbReference type="PANTHER" id="PTHR11761">
    <property type="entry name" value="50S/60S RIBOSOMAL PROTEIN L14/L23"/>
    <property type="match status" value="1"/>
</dbReference>
<dbReference type="PANTHER" id="PTHR11761:SF3">
    <property type="entry name" value="LARGE RIBOSOMAL SUBUNIT PROTEIN UL14M"/>
    <property type="match status" value="1"/>
</dbReference>
<dbReference type="Pfam" id="PF00238">
    <property type="entry name" value="Ribosomal_L14"/>
    <property type="match status" value="1"/>
</dbReference>
<dbReference type="SMART" id="SM01374">
    <property type="entry name" value="Ribosomal_L14"/>
    <property type="match status" value="1"/>
</dbReference>
<dbReference type="SUPFAM" id="SSF50193">
    <property type="entry name" value="Ribosomal protein L14"/>
    <property type="match status" value="1"/>
</dbReference>
<dbReference type="PROSITE" id="PS00049">
    <property type="entry name" value="RIBOSOMAL_L14"/>
    <property type="match status" value="1"/>
</dbReference>
<sequence length="122" mass="13564">MIQPQTLLNVADNSGARELMCIRIIGASNRRYAHIGDVIVAVIKKAVPNTPLERSEVIRAVIVRTCKELKRENGMIIRYDDNAAVVIDQEGNPKGTRIFGAIARELRQLNFTKIISLAPEVL</sequence>
<proteinExistence type="evidence at transcript level"/>
<geneLocation type="chloroplast"/>
<gene>
    <name evidence="1" type="primary">rpl14</name>
    <name type="ordered locus">CsCp078</name>
</gene>
<evidence type="ECO:0000255" key="1">
    <source>
        <dbReference type="HAMAP-Rule" id="MF_01367"/>
    </source>
</evidence>
<evidence type="ECO:0000305" key="2"/>
<feature type="chain" id="PRO_0000276341" description="Large ribosomal subunit protein uL14c">
    <location>
        <begin position="1"/>
        <end position="122"/>
    </location>
</feature>